<accession>Q9FFW4</accession>
<accession>F4KBK0</accession>
<proteinExistence type="predicted"/>
<dbReference type="EMBL" id="AB005231">
    <property type="protein sequence ID" value="BAB10147.1"/>
    <property type="status" value="ALT_SEQ"/>
    <property type="molecule type" value="Genomic_DNA"/>
</dbReference>
<dbReference type="EMBL" id="CP002688">
    <property type="protein sequence ID" value="AED94336.1"/>
    <property type="molecule type" value="Genomic_DNA"/>
</dbReference>
<dbReference type="RefSeq" id="NP_198673.2">
    <property type="nucleotide sequence ID" value="NM_123218.2"/>
</dbReference>
<dbReference type="STRING" id="3702.Q9FFW4"/>
<dbReference type="PaxDb" id="3702-AT5G38570.1"/>
<dbReference type="EnsemblPlants" id="AT5G38570.1">
    <property type="protein sequence ID" value="AT5G38570.1"/>
    <property type="gene ID" value="AT5G38570"/>
</dbReference>
<dbReference type="GeneID" id="833846"/>
<dbReference type="Gramene" id="AT5G38570.1">
    <property type="protein sequence ID" value="AT5G38570.1"/>
    <property type="gene ID" value="AT5G38570"/>
</dbReference>
<dbReference type="KEGG" id="ath:AT5G38570"/>
<dbReference type="Araport" id="AT5G38570"/>
<dbReference type="TAIR" id="AT5G38570"/>
<dbReference type="HOGENOM" id="CLU_010721_1_2_1"/>
<dbReference type="InParanoid" id="Q9FFW4"/>
<dbReference type="OMA" id="TICCLED"/>
<dbReference type="PRO" id="PR:Q9FFW4"/>
<dbReference type="Proteomes" id="UP000006548">
    <property type="component" value="Chromosome 5"/>
</dbReference>
<dbReference type="CDD" id="cd22160">
    <property type="entry name" value="F-box_AtFBL13-like"/>
    <property type="match status" value="1"/>
</dbReference>
<dbReference type="Gene3D" id="3.80.10.10">
    <property type="entry name" value="Ribonuclease Inhibitor"/>
    <property type="match status" value="1"/>
</dbReference>
<dbReference type="InterPro" id="IPR036047">
    <property type="entry name" value="F-box-like_dom_sf"/>
</dbReference>
<dbReference type="InterPro" id="IPR053781">
    <property type="entry name" value="F-box_AtFBL13-like"/>
</dbReference>
<dbReference type="InterPro" id="IPR001810">
    <property type="entry name" value="F-box_dom"/>
</dbReference>
<dbReference type="InterPro" id="IPR006566">
    <property type="entry name" value="FBD"/>
</dbReference>
<dbReference type="InterPro" id="IPR050232">
    <property type="entry name" value="FBL13/AtMIF1-like"/>
</dbReference>
<dbReference type="InterPro" id="IPR032675">
    <property type="entry name" value="LRR_dom_sf"/>
</dbReference>
<dbReference type="PANTHER" id="PTHR31900">
    <property type="entry name" value="F-BOX/RNI SUPERFAMILY PROTEIN-RELATED"/>
    <property type="match status" value="1"/>
</dbReference>
<dbReference type="PANTHER" id="PTHR31900:SF28">
    <property type="entry name" value="FBD DOMAIN-CONTAINING PROTEIN"/>
    <property type="match status" value="1"/>
</dbReference>
<dbReference type="Pfam" id="PF00646">
    <property type="entry name" value="F-box"/>
    <property type="match status" value="1"/>
</dbReference>
<dbReference type="Pfam" id="PF08387">
    <property type="entry name" value="FBD"/>
    <property type="match status" value="1"/>
</dbReference>
<dbReference type="SMART" id="SM00579">
    <property type="entry name" value="FBD"/>
    <property type="match status" value="1"/>
</dbReference>
<dbReference type="SUPFAM" id="SSF81383">
    <property type="entry name" value="F-box domain"/>
    <property type="match status" value="1"/>
</dbReference>
<dbReference type="SUPFAM" id="SSF52047">
    <property type="entry name" value="RNI-like"/>
    <property type="match status" value="1"/>
</dbReference>
<reference key="1">
    <citation type="journal article" date="1997" name="DNA Res.">
        <title>Structural analysis of Arabidopsis thaliana chromosome 5. I. Sequence features of the 1.6 Mb regions covered by twenty physically assigned P1 clones.</title>
        <authorList>
            <person name="Sato S."/>
            <person name="Kotani H."/>
            <person name="Nakamura Y."/>
            <person name="Kaneko T."/>
            <person name="Asamizu E."/>
            <person name="Fukami M."/>
            <person name="Miyajima N."/>
            <person name="Tabata S."/>
        </authorList>
    </citation>
    <scope>NUCLEOTIDE SEQUENCE [LARGE SCALE GENOMIC DNA]</scope>
    <source>
        <strain>cv. Columbia</strain>
    </source>
</reference>
<reference key="2">
    <citation type="journal article" date="2017" name="Plant J.">
        <title>Araport11: a complete reannotation of the Arabidopsis thaliana reference genome.</title>
        <authorList>
            <person name="Cheng C.Y."/>
            <person name="Krishnakumar V."/>
            <person name="Chan A.P."/>
            <person name="Thibaud-Nissen F."/>
            <person name="Schobel S."/>
            <person name="Town C.D."/>
        </authorList>
    </citation>
    <scope>GENOME REANNOTATION</scope>
    <source>
        <strain>cv. Columbia</strain>
    </source>
</reference>
<comment type="sequence caution" evidence="1">
    <conflict type="erroneous gene model prediction">
        <sequence resource="EMBL-CDS" id="BAB10147"/>
    </conflict>
</comment>
<organism>
    <name type="scientific">Arabidopsis thaliana</name>
    <name type="common">Mouse-ear cress</name>
    <dbReference type="NCBI Taxonomy" id="3702"/>
    <lineage>
        <taxon>Eukaryota</taxon>
        <taxon>Viridiplantae</taxon>
        <taxon>Streptophyta</taxon>
        <taxon>Embryophyta</taxon>
        <taxon>Tracheophyta</taxon>
        <taxon>Spermatophyta</taxon>
        <taxon>Magnoliopsida</taxon>
        <taxon>eudicotyledons</taxon>
        <taxon>Gunneridae</taxon>
        <taxon>Pentapetalae</taxon>
        <taxon>rosids</taxon>
        <taxon>malvids</taxon>
        <taxon>Brassicales</taxon>
        <taxon>Brassicaceae</taxon>
        <taxon>Camelineae</taxon>
        <taxon>Arabidopsis</taxon>
    </lineage>
</organism>
<keyword id="KW-1185">Reference proteome</keyword>
<feature type="chain" id="PRO_0000283148" description="Putative FBD-associated F-box protein At5g38570">
    <location>
        <begin position="1"/>
        <end position="379"/>
    </location>
</feature>
<feature type="domain" description="F-box">
    <location>
        <begin position="1"/>
        <end position="47"/>
    </location>
</feature>
<feature type="domain" description="FBD">
    <location>
        <begin position="295"/>
        <end position="345"/>
    </location>
</feature>
<name>FBD16_ARATH</name>
<gene>
    <name type="ordered locus">At5g38570</name>
    <name type="ORF">MBB18.12</name>
</gene>
<sequence>MDNINGLPDDLLVKILSFVPTYVAVSTCVLSKRWEFLWMWLPNLEFVSPWDSRPGIVDFINKKLPIHRAPVIERLCIHINSNPHIKPEYIKRWIEIAVSHYVRELQIDYHSKTKITLQLEAESYFIDGKYLQQLISGCPVLEDLSLRFCCNDNLREFTVIIPSLQSLSLFLFGNSNLNRYKIDTPSLKYLKLEDWNDPEHYSWTNMPKLREAYVDVESSNHLKTLIGSITSVKHLTICCLEDYLYGDGFIFNHLEHLKLCMCPFDSSNLLGQLLKGSPNLQVLDIFEMKRNDIVCWNQPSSVLECLLSSLKILNWSAYFGRPQDRDIAVYILKNACHLKTATFLTDKRINDVRRLKMIKELRLSPRASSTCQLVFGEDF</sequence>
<protein>
    <recommendedName>
        <fullName>Putative FBD-associated F-box protein At5g38570</fullName>
    </recommendedName>
</protein>
<evidence type="ECO:0000305" key="1"/>